<proteinExistence type="inferred from homology"/>
<evidence type="ECO:0000255" key="1">
    <source>
        <dbReference type="HAMAP-Rule" id="MF_01824"/>
    </source>
</evidence>
<gene>
    <name evidence="1" type="primary">pdxS</name>
    <name type="ordered locus">pc0237</name>
</gene>
<organism>
    <name type="scientific">Protochlamydia amoebophila (strain UWE25)</name>
    <dbReference type="NCBI Taxonomy" id="264201"/>
    <lineage>
        <taxon>Bacteria</taxon>
        <taxon>Pseudomonadati</taxon>
        <taxon>Chlamydiota</taxon>
        <taxon>Chlamydiia</taxon>
        <taxon>Parachlamydiales</taxon>
        <taxon>Parachlamydiaceae</taxon>
        <taxon>Candidatus Protochlamydia</taxon>
    </lineage>
</organism>
<protein>
    <recommendedName>
        <fullName evidence="1">Pyridoxal 5'-phosphate synthase subunit PdxS</fullName>
        <shortName evidence="1">PLP synthase subunit PdxS</shortName>
        <ecNumber evidence="1">4.3.3.6</ecNumber>
    </recommendedName>
    <alternativeName>
        <fullName evidence="1">Pdx1</fullName>
    </alternativeName>
</protein>
<reference key="1">
    <citation type="journal article" date="2004" name="Science">
        <title>Illuminating the evolutionary history of chlamydiae.</title>
        <authorList>
            <person name="Horn M."/>
            <person name="Collingro A."/>
            <person name="Schmitz-Esser S."/>
            <person name="Beier C.L."/>
            <person name="Purkhold U."/>
            <person name="Fartmann B."/>
            <person name="Brandt P."/>
            <person name="Nyakatura G.J."/>
            <person name="Droege M."/>
            <person name="Frishman D."/>
            <person name="Rattei T."/>
            <person name="Mewes H.-W."/>
            <person name="Wagner M."/>
        </authorList>
    </citation>
    <scope>NUCLEOTIDE SEQUENCE [LARGE SCALE GENOMIC DNA]</scope>
    <source>
        <strain>UWE25</strain>
    </source>
</reference>
<sequence>MGQFNQTEKGSFEIKVALAEMLKGGVIMDVTNSEQAKIAEDAGAVAVMALERIPSDIRVQGGIARMSNPELIQKIQETVSIPVMAKCRIGHFVEAQILESLQVDFIDESEVLTPADEENHIDKHIFKVPFVCGCRDLGEALRRIGEGAAMIRTKGEAGTGNVVEAVRHMRAINREIRHLMLMDSSELMAEAKRLGAPFHLVQMVAKSGVLPVPNFAAGGIATPADAALMMQLGAQSVFVGSGIFKSEDPAKRARAIVGATTFFQNPEKLAQFSMDLLDAMKGIDIRQLKREDLMAQRGW</sequence>
<keyword id="KW-0456">Lyase</keyword>
<keyword id="KW-0663">Pyridoxal phosphate</keyword>
<keyword id="KW-1185">Reference proteome</keyword>
<keyword id="KW-0704">Schiff base</keyword>
<accession>Q6MEN8</accession>
<name>PDXS_PARUW</name>
<comment type="function">
    <text evidence="1">Catalyzes the formation of pyridoxal 5'-phosphate from ribose 5-phosphate (RBP), glyceraldehyde 3-phosphate (G3P) and ammonia. The ammonia is provided by the PdxT subunit. Can also use ribulose 5-phosphate and dihydroxyacetone phosphate as substrates, resulting from enzyme-catalyzed isomerization of RBP and G3P, respectively.</text>
</comment>
<comment type="catalytic activity">
    <reaction evidence="1">
        <text>aldehydo-D-ribose 5-phosphate + D-glyceraldehyde 3-phosphate + L-glutamine = pyridoxal 5'-phosphate + L-glutamate + phosphate + 3 H2O + H(+)</text>
        <dbReference type="Rhea" id="RHEA:31507"/>
        <dbReference type="ChEBI" id="CHEBI:15377"/>
        <dbReference type="ChEBI" id="CHEBI:15378"/>
        <dbReference type="ChEBI" id="CHEBI:29985"/>
        <dbReference type="ChEBI" id="CHEBI:43474"/>
        <dbReference type="ChEBI" id="CHEBI:58273"/>
        <dbReference type="ChEBI" id="CHEBI:58359"/>
        <dbReference type="ChEBI" id="CHEBI:59776"/>
        <dbReference type="ChEBI" id="CHEBI:597326"/>
        <dbReference type="EC" id="4.3.3.6"/>
    </reaction>
</comment>
<comment type="pathway">
    <text evidence="1">Cofactor biosynthesis; pyridoxal 5'-phosphate biosynthesis.</text>
</comment>
<comment type="subunit">
    <text evidence="1">In the presence of PdxT, forms a dodecamer of heterodimers.</text>
</comment>
<comment type="similarity">
    <text evidence="1">Belongs to the PdxS/SNZ family.</text>
</comment>
<feature type="chain" id="PRO_0000109408" description="Pyridoxal 5'-phosphate synthase subunit PdxS">
    <location>
        <begin position="1"/>
        <end position="299"/>
    </location>
</feature>
<feature type="active site" description="Schiff-base intermediate with D-ribose 5-phosphate" evidence="1">
    <location>
        <position position="86"/>
    </location>
</feature>
<feature type="binding site" evidence="1">
    <location>
        <position position="29"/>
    </location>
    <ligand>
        <name>D-ribose 5-phosphate</name>
        <dbReference type="ChEBI" id="CHEBI:78346"/>
    </ligand>
</feature>
<feature type="binding site" evidence="1">
    <location>
        <position position="158"/>
    </location>
    <ligand>
        <name>D-ribose 5-phosphate</name>
        <dbReference type="ChEBI" id="CHEBI:78346"/>
    </ligand>
</feature>
<feature type="binding site" evidence="1">
    <location>
        <position position="170"/>
    </location>
    <ligand>
        <name>D-glyceraldehyde 3-phosphate</name>
        <dbReference type="ChEBI" id="CHEBI:59776"/>
    </ligand>
</feature>
<feature type="binding site" evidence="1">
    <location>
        <position position="219"/>
    </location>
    <ligand>
        <name>D-ribose 5-phosphate</name>
        <dbReference type="ChEBI" id="CHEBI:78346"/>
    </ligand>
</feature>
<feature type="binding site" evidence="1">
    <location>
        <begin position="240"/>
        <end position="241"/>
    </location>
    <ligand>
        <name>D-ribose 5-phosphate</name>
        <dbReference type="ChEBI" id="CHEBI:78346"/>
    </ligand>
</feature>
<dbReference type="EC" id="4.3.3.6" evidence="1"/>
<dbReference type="EMBL" id="BX908798">
    <property type="protein sequence ID" value="CAF22961.1"/>
    <property type="molecule type" value="Genomic_DNA"/>
</dbReference>
<dbReference type="RefSeq" id="WP_011174787.1">
    <property type="nucleotide sequence ID" value="NC_005861.2"/>
</dbReference>
<dbReference type="SMR" id="Q6MEN8"/>
<dbReference type="STRING" id="264201.pc0237"/>
<dbReference type="KEGG" id="pcu:PC_RS01150"/>
<dbReference type="eggNOG" id="COG0214">
    <property type="taxonomic scope" value="Bacteria"/>
</dbReference>
<dbReference type="HOGENOM" id="CLU_055352_1_0_0"/>
<dbReference type="OrthoDB" id="9772545at2"/>
<dbReference type="UniPathway" id="UPA00245"/>
<dbReference type="Proteomes" id="UP000000529">
    <property type="component" value="Chromosome"/>
</dbReference>
<dbReference type="GO" id="GO:0036381">
    <property type="term" value="F:pyridoxal 5'-phosphate synthase (glutamine hydrolysing) activity"/>
    <property type="evidence" value="ECO:0007669"/>
    <property type="project" value="UniProtKB-UniRule"/>
</dbReference>
<dbReference type="GO" id="GO:0006520">
    <property type="term" value="P:amino acid metabolic process"/>
    <property type="evidence" value="ECO:0007669"/>
    <property type="project" value="TreeGrafter"/>
</dbReference>
<dbReference type="GO" id="GO:0042823">
    <property type="term" value="P:pyridoxal phosphate biosynthetic process"/>
    <property type="evidence" value="ECO:0007669"/>
    <property type="project" value="UniProtKB-UniRule"/>
</dbReference>
<dbReference type="GO" id="GO:0008615">
    <property type="term" value="P:pyridoxine biosynthetic process"/>
    <property type="evidence" value="ECO:0007669"/>
    <property type="project" value="TreeGrafter"/>
</dbReference>
<dbReference type="CDD" id="cd04727">
    <property type="entry name" value="pdxS"/>
    <property type="match status" value="1"/>
</dbReference>
<dbReference type="FunFam" id="3.20.20.70:FF:000001">
    <property type="entry name" value="Pyridoxine biosynthesis protein PDX1"/>
    <property type="match status" value="1"/>
</dbReference>
<dbReference type="Gene3D" id="3.20.20.70">
    <property type="entry name" value="Aldolase class I"/>
    <property type="match status" value="1"/>
</dbReference>
<dbReference type="HAMAP" id="MF_01824">
    <property type="entry name" value="PdxS"/>
    <property type="match status" value="1"/>
</dbReference>
<dbReference type="InterPro" id="IPR013785">
    <property type="entry name" value="Aldolase_TIM"/>
</dbReference>
<dbReference type="InterPro" id="IPR001852">
    <property type="entry name" value="PdxS/SNZ"/>
</dbReference>
<dbReference type="InterPro" id="IPR033755">
    <property type="entry name" value="PdxS/SNZ_N"/>
</dbReference>
<dbReference type="InterPro" id="IPR011060">
    <property type="entry name" value="RibuloseP-bd_barrel"/>
</dbReference>
<dbReference type="NCBIfam" id="NF003215">
    <property type="entry name" value="PRK04180.1"/>
    <property type="match status" value="1"/>
</dbReference>
<dbReference type="NCBIfam" id="TIGR00343">
    <property type="entry name" value="pyridoxal 5'-phosphate synthase lyase subunit PdxS"/>
    <property type="match status" value="1"/>
</dbReference>
<dbReference type="PANTHER" id="PTHR31829">
    <property type="entry name" value="PYRIDOXAL 5'-PHOSPHATE SYNTHASE SUBUNIT SNZ1-RELATED"/>
    <property type="match status" value="1"/>
</dbReference>
<dbReference type="PANTHER" id="PTHR31829:SF0">
    <property type="entry name" value="PYRIDOXAL 5'-PHOSPHATE SYNTHASE SUBUNIT SNZ1-RELATED"/>
    <property type="match status" value="1"/>
</dbReference>
<dbReference type="Pfam" id="PF01680">
    <property type="entry name" value="SOR_SNZ"/>
    <property type="match status" value="1"/>
</dbReference>
<dbReference type="PIRSF" id="PIRSF029271">
    <property type="entry name" value="Pdx1"/>
    <property type="match status" value="1"/>
</dbReference>
<dbReference type="SUPFAM" id="SSF51366">
    <property type="entry name" value="Ribulose-phoshate binding barrel"/>
    <property type="match status" value="1"/>
</dbReference>
<dbReference type="PROSITE" id="PS01235">
    <property type="entry name" value="PDXS_SNZ_1"/>
    <property type="match status" value="1"/>
</dbReference>
<dbReference type="PROSITE" id="PS51129">
    <property type="entry name" value="PDXS_SNZ_2"/>
    <property type="match status" value="1"/>
</dbReference>